<comment type="subunit">
    <text evidence="1 3">Heterotetramer of two type I and two type II keratins (By similarity). Forms a heterodimer with KRT14 (By similarity). Interacts with NOD2 (By similarity).</text>
</comment>
<comment type="miscellaneous">
    <text>There are two types of cytoskeletal and microfibrillar keratin: I (acidic; 40-55 kDa) and II (neutral to basic; 56-70 kDa).</text>
</comment>
<comment type="similarity">
    <text evidence="5">Belongs to the intermediate filament family.</text>
</comment>
<protein>
    <recommendedName>
        <fullName>Keratin, type I cytoskeletal 15</fullName>
    </recommendedName>
    <alternativeName>
        <fullName>Cytokeratin-15</fullName>
        <shortName>CK-15</shortName>
    </alternativeName>
    <alternativeName>
        <fullName>Keratin-15</fullName>
        <shortName>K15</shortName>
    </alternativeName>
    <alternativeName>
        <fullName>Type I keratin Ka15</fullName>
    </alternativeName>
</protein>
<reference evidence="7" key="1">
    <citation type="journal article" date="2004" name="Nature">
        <title>Genome sequence of the Brown Norway rat yields insights into mammalian evolution.</title>
        <authorList>
            <person name="Gibbs R.A."/>
            <person name="Weinstock G.M."/>
            <person name="Metzker M.L."/>
            <person name="Muzny D.M."/>
            <person name="Sodergren E.J."/>
            <person name="Scherer S."/>
            <person name="Scott G."/>
            <person name="Steffen D."/>
            <person name="Worley K.C."/>
            <person name="Burch P.E."/>
            <person name="Okwuonu G."/>
            <person name="Hines S."/>
            <person name="Lewis L."/>
            <person name="Deramo C."/>
            <person name="Delgado O."/>
            <person name="Dugan-Rocha S."/>
            <person name="Miner G."/>
            <person name="Morgan M."/>
            <person name="Hawes A."/>
            <person name="Gill R."/>
            <person name="Holt R.A."/>
            <person name="Adams M.D."/>
            <person name="Amanatides P.G."/>
            <person name="Baden-Tillson H."/>
            <person name="Barnstead M."/>
            <person name="Chin S."/>
            <person name="Evans C.A."/>
            <person name="Ferriera S."/>
            <person name="Fosler C."/>
            <person name="Glodek A."/>
            <person name="Gu Z."/>
            <person name="Jennings D."/>
            <person name="Kraft C.L."/>
            <person name="Nguyen T."/>
            <person name="Pfannkoch C.M."/>
            <person name="Sitter C."/>
            <person name="Sutton G.G."/>
            <person name="Venter J.C."/>
            <person name="Woodage T."/>
            <person name="Smith D."/>
            <person name="Lee H.-M."/>
            <person name="Gustafson E."/>
            <person name="Cahill P."/>
            <person name="Kana A."/>
            <person name="Doucette-Stamm L."/>
            <person name="Weinstock K."/>
            <person name="Fechtel K."/>
            <person name="Weiss R.B."/>
            <person name="Dunn D.M."/>
            <person name="Green E.D."/>
            <person name="Blakesley R.W."/>
            <person name="Bouffard G.G."/>
            <person name="De Jong P.J."/>
            <person name="Osoegawa K."/>
            <person name="Zhu B."/>
            <person name="Marra M."/>
            <person name="Schein J."/>
            <person name="Bosdet I."/>
            <person name="Fjell C."/>
            <person name="Jones S."/>
            <person name="Krzywinski M."/>
            <person name="Mathewson C."/>
            <person name="Siddiqui A."/>
            <person name="Wye N."/>
            <person name="McPherson J."/>
            <person name="Zhao S."/>
            <person name="Fraser C.M."/>
            <person name="Shetty J."/>
            <person name="Shatsman S."/>
            <person name="Geer K."/>
            <person name="Chen Y."/>
            <person name="Abramzon S."/>
            <person name="Nierman W.C."/>
            <person name="Havlak P.H."/>
            <person name="Chen R."/>
            <person name="Durbin K.J."/>
            <person name="Egan A."/>
            <person name="Ren Y."/>
            <person name="Song X.-Z."/>
            <person name="Li B."/>
            <person name="Liu Y."/>
            <person name="Qin X."/>
            <person name="Cawley S."/>
            <person name="Cooney A.J."/>
            <person name="D'Souza L.M."/>
            <person name="Martin K."/>
            <person name="Wu J.Q."/>
            <person name="Gonzalez-Garay M.L."/>
            <person name="Jackson A.R."/>
            <person name="Kalafus K.J."/>
            <person name="McLeod M.P."/>
            <person name="Milosavljevic A."/>
            <person name="Virk D."/>
            <person name="Volkov A."/>
            <person name="Wheeler D.A."/>
            <person name="Zhang Z."/>
            <person name="Bailey J.A."/>
            <person name="Eichler E.E."/>
            <person name="Tuzun E."/>
            <person name="Birney E."/>
            <person name="Mongin E."/>
            <person name="Ureta-Vidal A."/>
            <person name="Woodwark C."/>
            <person name="Zdobnov E."/>
            <person name="Bork P."/>
            <person name="Suyama M."/>
            <person name="Torrents D."/>
            <person name="Alexandersson M."/>
            <person name="Trask B.J."/>
            <person name="Young J.M."/>
            <person name="Huang H."/>
            <person name="Wang H."/>
            <person name="Xing H."/>
            <person name="Daniels S."/>
            <person name="Gietzen D."/>
            <person name="Schmidt J."/>
            <person name="Stevens K."/>
            <person name="Vitt U."/>
            <person name="Wingrove J."/>
            <person name="Camara F."/>
            <person name="Mar Alba M."/>
            <person name="Abril J.F."/>
            <person name="Guigo R."/>
            <person name="Smit A."/>
            <person name="Dubchak I."/>
            <person name="Rubin E.M."/>
            <person name="Couronne O."/>
            <person name="Poliakov A."/>
            <person name="Huebner N."/>
            <person name="Ganten D."/>
            <person name="Goesele C."/>
            <person name="Hummel O."/>
            <person name="Kreitler T."/>
            <person name="Lee Y.-A."/>
            <person name="Monti J."/>
            <person name="Schulz H."/>
            <person name="Zimdahl H."/>
            <person name="Himmelbauer H."/>
            <person name="Lehrach H."/>
            <person name="Jacob H.J."/>
            <person name="Bromberg S."/>
            <person name="Gullings-Handley J."/>
            <person name="Jensen-Seaman M.I."/>
            <person name="Kwitek A.E."/>
            <person name="Lazar J."/>
            <person name="Pasko D."/>
            <person name="Tonellato P.J."/>
            <person name="Twigger S."/>
            <person name="Ponting C.P."/>
            <person name="Duarte J.M."/>
            <person name="Rice S."/>
            <person name="Goodstadt L."/>
            <person name="Beatson S.A."/>
            <person name="Emes R.D."/>
            <person name="Winter E.E."/>
            <person name="Webber C."/>
            <person name="Brandt P."/>
            <person name="Nyakatura G."/>
            <person name="Adetobi M."/>
            <person name="Chiaromonte F."/>
            <person name="Elnitski L."/>
            <person name="Eswara P."/>
            <person name="Hardison R.C."/>
            <person name="Hou M."/>
            <person name="Kolbe D."/>
            <person name="Makova K."/>
            <person name="Miller W."/>
            <person name="Nekrutenko A."/>
            <person name="Riemer C."/>
            <person name="Schwartz S."/>
            <person name="Taylor J."/>
            <person name="Yang S."/>
            <person name="Zhang Y."/>
            <person name="Lindpaintner K."/>
            <person name="Andrews T.D."/>
            <person name="Caccamo M."/>
            <person name="Clamp M."/>
            <person name="Clarke L."/>
            <person name="Curwen V."/>
            <person name="Durbin R.M."/>
            <person name="Eyras E."/>
            <person name="Searle S.M."/>
            <person name="Cooper G.M."/>
            <person name="Batzoglou S."/>
            <person name="Brudno M."/>
            <person name="Sidow A."/>
            <person name="Stone E.A."/>
            <person name="Payseur B.A."/>
            <person name="Bourque G."/>
            <person name="Lopez-Otin C."/>
            <person name="Puente X.S."/>
            <person name="Chakrabarti K."/>
            <person name="Chatterji S."/>
            <person name="Dewey C."/>
            <person name="Pachter L."/>
            <person name="Bray N."/>
            <person name="Yap V.B."/>
            <person name="Caspi A."/>
            <person name="Tesler G."/>
            <person name="Pevzner P.A."/>
            <person name="Haussler D."/>
            <person name="Roskin K.M."/>
            <person name="Baertsch R."/>
            <person name="Clawson H."/>
            <person name="Furey T.S."/>
            <person name="Hinrichs A.S."/>
            <person name="Karolchik D."/>
            <person name="Kent W.J."/>
            <person name="Rosenbloom K.R."/>
            <person name="Trumbower H."/>
            <person name="Weirauch M."/>
            <person name="Cooper D.N."/>
            <person name="Stenson P.D."/>
            <person name="Ma B."/>
            <person name="Brent M."/>
            <person name="Arumugam M."/>
            <person name="Shteynberg D."/>
            <person name="Copley R.R."/>
            <person name="Taylor M.S."/>
            <person name="Riethman H."/>
            <person name="Mudunuri U."/>
            <person name="Peterson J."/>
            <person name="Guyer M."/>
            <person name="Felsenfeld A."/>
            <person name="Old S."/>
            <person name="Mockrin S."/>
            <person name="Collins F.S."/>
        </authorList>
    </citation>
    <scope>NUCLEOTIDE SEQUENCE [LARGE SCALE GENOMIC DNA]</scope>
    <source>
        <strain evidence="6">Brown Norway</strain>
    </source>
</reference>
<reference key="2">
    <citation type="journal article" date="2004" name="Genome Res.">
        <title>The status, quality, and expansion of the NIH full-length cDNA project: the Mammalian Gene Collection (MGC).</title>
        <authorList>
            <consortium name="The MGC Project Team"/>
        </authorList>
    </citation>
    <scope>NUCLEOTIDE SEQUENCE [LARGE SCALE MRNA]</scope>
    <source>
        <tissue>Prostate</tissue>
    </source>
</reference>
<reference evidence="7 8" key="3">
    <citation type="submission" date="2007-07" db="UniProtKB">
        <authorList>
            <person name="Lubec G."/>
            <person name="Kang S.U."/>
        </authorList>
    </citation>
    <scope>PROTEIN SEQUENCE OF 96-104 AND 175-181</scope>
    <scope>IDENTIFICATION BY MASS SPECTROMETRY</scope>
    <source>
        <strain>Sprague-Dawley</strain>
        <tissue>Brain</tissue>
    </source>
</reference>
<reference evidence="7 9" key="4">
    <citation type="journal article" date="2004" name="Eur. J. Cell Biol.">
        <title>Comprehensive analysis of keratin gene clusters in humans and rodents.</title>
        <authorList>
            <person name="Hesse M."/>
            <person name="Zimek A."/>
            <person name="Weber K."/>
            <person name="Magin T.M."/>
        </authorList>
    </citation>
    <scope>IDENTIFICATION</scope>
    <source>
        <strain evidence="9">Brown Norway</strain>
    </source>
</reference>
<reference key="5">
    <citation type="journal article" date="2006" name="Proc. Natl. Acad. Sci. U.S.A.">
        <title>Quantitative phosphoproteomics of vasopressin-sensitive renal cells: regulation of aquaporin-2 phosphorylation at two sites.</title>
        <authorList>
            <person name="Hoffert J.D."/>
            <person name="Pisitkun T."/>
            <person name="Wang G."/>
            <person name="Shen R.-F."/>
            <person name="Knepper M.A."/>
        </authorList>
    </citation>
    <scope>PHOSPHORYLATION [LARGE SCALE ANALYSIS] AT THR-290 AND THR-312</scope>
    <scope>IDENTIFICATION BY MASS SPECTROMETRY [LARGE SCALE ANALYSIS]</scope>
</reference>
<name>K1C15_RAT</name>
<organism>
    <name type="scientific">Rattus norvegicus</name>
    <name type="common">Rat</name>
    <dbReference type="NCBI Taxonomy" id="10116"/>
    <lineage>
        <taxon>Eukaryota</taxon>
        <taxon>Metazoa</taxon>
        <taxon>Chordata</taxon>
        <taxon>Craniata</taxon>
        <taxon>Vertebrata</taxon>
        <taxon>Euteleostomi</taxon>
        <taxon>Mammalia</taxon>
        <taxon>Eutheria</taxon>
        <taxon>Euarchontoglires</taxon>
        <taxon>Glires</taxon>
        <taxon>Rodentia</taxon>
        <taxon>Myomorpha</taxon>
        <taxon>Muroidea</taxon>
        <taxon>Muridae</taxon>
        <taxon>Murinae</taxon>
        <taxon>Rattus</taxon>
    </lineage>
</organism>
<gene>
    <name evidence="1" type="primary">Krt15</name>
    <name evidence="9" type="synonym">Ka15</name>
</gene>
<feature type="chain" id="PRO_0000063659" description="Keratin, type I cytoskeletal 15">
    <location>
        <begin position="1"/>
        <end position="447"/>
    </location>
</feature>
<feature type="domain" description="IF rod" evidence="5">
    <location>
        <begin position="94"/>
        <end position="406"/>
    </location>
</feature>
<feature type="region of interest" description="Head" evidence="4">
    <location>
        <begin position="1"/>
        <end position="93"/>
    </location>
</feature>
<feature type="region of interest" description="Coil 1A" evidence="4">
    <location>
        <begin position="94"/>
        <end position="129"/>
    </location>
</feature>
<feature type="region of interest" description="Linker 1" evidence="4">
    <location>
        <begin position="130"/>
        <end position="148"/>
    </location>
</feature>
<feature type="region of interest" description="Coil 1B" evidence="4">
    <location>
        <begin position="149"/>
        <end position="240"/>
    </location>
</feature>
<feature type="region of interest" description="Linker 12" evidence="4">
    <location>
        <begin position="241"/>
        <end position="260"/>
    </location>
</feature>
<feature type="region of interest" description="Coil 2" evidence="4">
    <location>
        <begin position="261"/>
        <end position="402"/>
    </location>
</feature>
<feature type="region of interest" description="Tail" evidence="4">
    <location>
        <begin position="403"/>
        <end position="447"/>
    </location>
</feature>
<feature type="modified residue" description="Phosphoserine" evidence="2">
    <location>
        <position position="16"/>
    </location>
</feature>
<feature type="modified residue" description="Phosphoserine" evidence="3">
    <location>
        <position position="28"/>
    </location>
</feature>
<feature type="modified residue" description="Phosphoserine" evidence="3">
    <location>
        <position position="33"/>
    </location>
</feature>
<feature type="modified residue" description="Phosphoserine" evidence="2">
    <location>
        <position position="47"/>
    </location>
</feature>
<feature type="modified residue" description="Phosphothreonine" evidence="2">
    <location>
        <position position="120"/>
    </location>
</feature>
<feature type="modified residue" description="Phosphothreonine" evidence="10">
    <location>
        <position position="290"/>
    </location>
</feature>
<feature type="modified residue" description="Phosphothreonine" evidence="10">
    <location>
        <position position="312"/>
    </location>
</feature>
<feature type="cross-link" description="Glycyl lysine isopeptide (Lys-Gly) (interchain with G-Cter in SUMO2)" evidence="2">
    <location>
        <position position="289"/>
    </location>
</feature>
<feature type="cross-link" description="Glycyl lysine isopeptide (Lys-Gly) (interchain with G-Cter in SUMO1); alternate" evidence="2">
    <location>
        <position position="438"/>
    </location>
</feature>
<feature type="cross-link" description="Glycyl lysine isopeptide (Lys-Gly) (interchain with G-Cter in SUMO2); alternate" evidence="2">
    <location>
        <position position="438"/>
    </location>
</feature>
<dbReference type="EMBL" id="AABR03073341">
    <property type="status" value="NOT_ANNOTATED_CDS"/>
    <property type="molecule type" value="Genomic_DNA"/>
</dbReference>
<dbReference type="EMBL" id="BC101868">
    <property type="protein sequence ID" value="AAI01869.1"/>
    <property type="molecule type" value="mRNA"/>
</dbReference>
<dbReference type="EMBL" id="BK004045">
    <property type="protein sequence ID" value="DAA04479.1"/>
    <property type="molecule type" value="mRNA"/>
</dbReference>
<dbReference type="RefSeq" id="NP_001004022.1">
    <property type="nucleotide sequence ID" value="NM_001004022.2"/>
</dbReference>
<dbReference type="SMR" id="Q6IFV3"/>
<dbReference type="FunCoup" id="Q6IFV3">
    <property type="interactions" value="170"/>
</dbReference>
<dbReference type="STRING" id="10116.ENSRNOP00000019037"/>
<dbReference type="GlyGen" id="Q6IFV3">
    <property type="glycosylation" value="1 site, 1 O-linked glycan (1 site)"/>
</dbReference>
<dbReference type="iPTMnet" id="Q6IFV3"/>
<dbReference type="PhosphoSitePlus" id="Q6IFV3"/>
<dbReference type="jPOST" id="Q6IFV3"/>
<dbReference type="PaxDb" id="10116-ENSRNOP00000019037"/>
<dbReference type="GeneID" id="287700"/>
<dbReference type="KEGG" id="rno:287700"/>
<dbReference type="UCSC" id="RGD:1303044">
    <property type="organism name" value="rat"/>
</dbReference>
<dbReference type="AGR" id="RGD:1303044"/>
<dbReference type="CTD" id="3866"/>
<dbReference type="RGD" id="1303044">
    <property type="gene designation" value="Krt15"/>
</dbReference>
<dbReference type="VEuPathDB" id="HostDB:ENSRNOG00000003899"/>
<dbReference type="eggNOG" id="ENOG502QTM6">
    <property type="taxonomic scope" value="Eukaryota"/>
</dbReference>
<dbReference type="HOGENOM" id="CLU_012560_8_1_1"/>
<dbReference type="InParanoid" id="Q6IFV3"/>
<dbReference type="OrthoDB" id="86089at9989"/>
<dbReference type="PhylomeDB" id="Q6IFV3"/>
<dbReference type="TreeFam" id="TF332742"/>
<dbReference type="Reactome" id="R-RNO-6805567">
    <property type="pathway name" value="Keratinization"/>
</dbReference>
<dbReference type="Reactome" id="R-RNO-6809371">
    <property type="pathway name" value="Formation of the cornified envelope"/>
</dbReference>
<dbReference type="PRO" id="PR:Q6IFV3"/>
<dbReference type="Proteomes" id="UP000002494">
    <property type="component" value="Chromosome 10"/>
</dbReference>
<dbReference type="Bgee" id="ENSRNOG00000014099">
    <property type="expression patterns" value="Expressed in esophagus and 12 other cell types or tissues"/>
</dbReference>
<dbReference type="GO" id="GO:0005856">
    <property type="term" value="C:cytoskeleton"/>
    <property type="evidence" value="ECO:0000318"/>
    <property type="project" value="GO_Central"/>
</dbReference>
<dbReference type="GO" id="GO:0005882">
    <property type="term" value="C:intermediate filament"/>
    <property type="evidence" value="ECO:0000304"/>
    <property type="project" value="RGD"/>
</dbReference>
<dbReference type="GO" id="GO:0045095">
    <property type="term" value="C:keratin filament"/>
    <property type="evidence" value="ECO:0000304"/>
    <property type="project" value="RGD"/>
</dbReference>
<dbReference type="GO" id="GO:0097110">
    <property type="term" value="F:scaffold protein binding"/>
    <property type="evidence" value="ECO:0000266"/>
    <property type="project" value="RGD"/>
</dbReference>
<dbReference type="GO" id="GO:0005200">
    <property type="term" value="F:structural constituent of cytoskeleton"/>
    <property type="evidence" value="ECO:0000304"/>
    <property type="project" value="RGD"/>
</dbReference>
<dbReference type="GO" id="GO:0030855">
    <property type="term" value="P:epithelial cell differentiation"/>
    <property type="evidence" value="ECO:0000318"/>
    <property type="project" value="GO_Central"/>
</dbReference>
<dbReference type="GO" id="GO:0045109">
    <property type="term" value="P:intermediate filament organization"/>
    <property type="evidence" value="ECO:0000318"/>
    <property type="project" value="GO_Central"/>
</dbReference>
<dbReference type="GO" id="GO:0045103">
    <property type="term" value="P:intermediate filament-based process"/>
    <property type="evidence" value="ECO:0000304"/>
    <property type="project" value="RGD"/>
</dbReference>
<dbReference type="FunFam" id="1.20.5.1160:FF:000002">
    <property type="entry name" value="Type I keratin 10"/>
    <property type="match status" value="1"/>
</dbReference>
<dbReference type="FunFam" id="1.20.5.170:FF:000002">
    <property type="entry name" value="Type I keratin KA11"/>
    <property type="match status" value="1"/>
</dbReference>
<dbReference type="FunFam" id="1.20.5.500:FF:000001">
    <property type="entry name" value="Type II keratin 23"/>
    <property type="match status" value="1"/>
</dbReference>
<dbReference type="Gene3D" id="1.20.5.170">
    <property type="match status" value="1"/>
</dbReference>
<dbReference type="Gene3D" id="1.20.5.500">
    <property type="entry name" value="Single helix bin"/>
    <property type="match status" value="1"/>
</dbReference>
<dbReference type="Gene3D" id="1.20.5.1160">
    <property type="entry name" value="Vasodilator-stimulated phosphoprotein"/>
    <property type="match status" value="1"/>
</dbReference>
<dbReference type="InterPro" id="IPR018039">
    <property type="entry name" value="IF_conserved"/>
</dbReference>
<dbReference type="InterPro" id="IPR039008">
    <property type="entry name" value="IF_rod_dom"/>
</dbReference>
<dbReference type="InterPro" id="IPR002957">
    <property type="entry name" value="Keratin_I"/>
</dbReference>
<dbReference type="PANTHER" id="PTHR23239">
    <property type="entry name" value="INTERMEDIATE FILAMENT"/>
    <property type="match status" value="1"/>
</dbReference>
<dbReference type="PANTHER" id="PTHR23239:SF164">
    <property type="entry name" value="KERATIN, TYPE I CYTOSKELETAL 15"/>
    <property type="match status" value="1"/>
</dbReference>
<dbReference type="Pfam" id="PF00038">
    <property type="entry name" value="Filament"/>
    <property type="match status" value="1"/>
</dbReference>
<dbReference type="PRINTS" id="PR01248">
    <property type="entry name" value="TYPE1KERATIN"/>
</dbReference>
<dbReference type="SMART" id="SM01391">
    <property type="entry name" value="Filament"/>
    <property type="match status" value="1"/>
</dbReference>
<dbReference type="SUPFAM" id="SSF64593">
    <property type="entry name" value="Intermediate filament protein, coiled coil region"/>
    <property type="match status" value="2"/>
</dbReference>
<dbReference type="PROSITE" id="PS00226">
    <property type="entry name" value="IF_ROD_1"/>
    <property type="match status" value="1"/>
</dbReference>
<dbReference type="PROSITE" id="PS51842">
    <property type="entry name" value="IF_ROD_2"/>
    <property type="match status" value="1"/>
</dbReference>
<proteinExistence type="evidence at protein level"/>
<sequence>MATTFLQTSSTFGSGSTRGGSLRVGGGSFGGGSLYGGGGSRSISASSARFVSSGAGVGFGGGMSCGFGGGFGGGFGGGFGDFGGGDGGLLSGNEKVTMQNLNDRLASYLDKVRALEEANTELEVKIRDWYQKQSPASPDRDYSHYFKTMEEIRDKILAATIDNSRVILEIDNARLAADDFRLKYENELALRQGVEADINGLRRVLDELTLARTDLEMQIEQLNEELAYLKKNHEEEMKEFSSQLAGQVNVEMDAAPGVDLTRMLAEMREQYEAIAEKNRRDVEAWFFSKTEELNKEVASNTEMIQTSKTEITDLRRTLQGLEIELQSQLSMKAGLENSLAEVECRYATQLQQIQGLITGLETQLSELRCEMEAQNQEYNMLLDIKTRLEQEISTYRNLLEGQDAKMAAIGVREASLRGGSSGGGSNFHISVEESVDGKVVSSRKRES</sequence>
<accession>Q6IFV3</accession>
<keyword id="KW-0175">Coiled coil</keyword>
<keyword id="KW-0903">Direct protein sequencing</keyword>
<keyword id="KW-0403">Intermediate filament</keyword>
<keyword id="KW-1017">Isopeptide bond</keyword>
<keyword id="KW-0416">Keratin</keyword>
<keyword id="KW-0597">Phosphoprotein</keyword>
<keyword id="KW-1185">Reference proteome</keyword>
<keyword id="KW-0832">Ubl conjugation</keyword>
<evidence type="ECO:0000250" key="1">
    <source>
        <dbReference type="UniProtKB" id="P19012"/>
    </source>
</evidence>
<evidence type="ECO:0000250" key="2">
    <source>
        <dbReference type="UniProtKB" id="Q04695"/>
    </source>
</evidence>
<evidence type="ECO:0000250" key="3">
    <source>
        <dbReference type="UniProtKB" id="Q61414"/>
    </source>
</evidence>
<evidence type="ECO:0000255" key="4"/>
<evidence type="ECO:0000255" key="5">
    <source>
        <dbReference type="PROSITE-ProRule" id="PRU01188"/>
    </source>
</evidence>
<evidence type="ECO:0000269" key="6">
    <source>
    </source>
</evidence>
<evidence type="ECO:0000305" key="7"/>
<evidence type="ECO:0000312" key="8">
    <source>
        <dbReference type="EMBL" id="AAI01869.1"/>
    </source>
</evidence>
<evidence type="ECO:0000312" key="9">
    <source>
        <dbReference type="EMBL" id="DAA04479.1"/>
    </source>
</evidence>
<evidence type="ECO:0007744" key="10">
    <source>
    </source>
</evidence>